<gene>
    <name type="ordered locus">SUB0431</name>
</gene>
<evidence type="ECO:0000255" key="1">
    <source>
        <dbReference type="HAMAP-Rule" id="MF_01126"/>
    </source>
</evidence>
<organism>
    <name type="scientific">Streptococcus uberis (strain ATCC BAA-854 / 0140J)</name>
    <dbReference type="NCBI Taxonomy" id="218495"/>
    <lineage>
        <taxon>Bacteria</taxon>
        <taxon>Bacillati</taxon>
        <taxon>Bacillota</taxon>
        <taxon>Bacilli</taxon>
        <taxon>Lactobacillales</taxon>
        <taxon>Streptococcaceae</taxon>
        <taxon>Streptococcus</taxon>
    </lineage>
</organism>
<dbReference type="EMBL" id="AM946015">
    <property type="protein sequence ID" value="CAR41097.1"/>
    <property type="molecule type" value="Genomic_DNA"/>
</dbReference>
<dbReference type="RefSeq" id="WP_012657966.1">
    <property type="nucleotide sequence ID" value="NC_012004.1"/>
</dbReference>
<dbReference type="SMR" id="B9DTV0"/>
<dbReference type="STRING" id="218495.SUB0431"/>
<dbReference type="KEGG" id="sub:SUB0431"/>
<dbReference type="eggNOG" id="COG4471">
    <property type="taxonomic scope" value="Bacteria"/>
</dbReference>
<dbReference type="HOGENOM" id="CLU_159890_1_0_9"/>
<dbReference type="OrthoDB" id="2990788at2"/>
<dbReference type="Proteomes" id="UP000000449">
    <property type="component" value="Chromosome"/>
</dbReference>
<dbReference type="GO" id="GO:0005737">
    <property type="term" value="C:cytoplasm"/>
    <property type="evidence" value="ECO:0007669"/>
    <property type="project" value="UniProtKB-SubCell"/>
</dbReference>
<dbReference type="HAMAP" id="MF_01126">
    <property type="entry name" value="UPF0298"/>
    <property type="match status" value="1"/>
</dbReference>
<dbReference type="InterPro" id="IPR016979">
    <property type="entry name" value="DUF2129"/>
</dbReference>
<dbReference type="NCBIfam" id="NF002631">
    <property type="entry name" value="PRK02302.1"/>
    <property type="match status" value="1"/>
</dbReference>
<dbReference type="Pfam" id="PF09902">
    <property type="entry name" value="DUF2129"/>
    <property type="match status" value="1"/>
</dbReference>
<dbReference type="PIRSF" id="PIRSF031653">
    <property type="entry name" value="UCP031653"/>
    <property type="match status" value="1"/>
</dbReference>
<reference key="1">
    <citation type="journal article" date="2009" name="BMC Genomics">
        <title>Evidence for niche adaptation in the genome of the bovine pathogen Streptococcus uberis.</title>
        <authorList>
            <person name="Ward P.N."/>
            <person name="Holden M.T.G."/>
            <person name="Leigh J.A."/>
            <person name="Lennard N."/>
            <person name="Bignell A."/>
            <person name="Barron A."/>
            <person name="Clark L."/>
            <person name="Quail M.A."/>
            <person name="Woodward J."/>
            <person name="Barrell B.G."/>
            <person name="Egan S.A."/>
            <person name="Field T.R."/>
            <person name="Maskell D."/>
            <person name="Kehoe M."/>
            <person name="Dowson C.G."/>
            <person name="Chanter N."/>
            <person name="Whatmore A.M."/>
            <person name="Bentley S.D."/>
            <person name="Parkhill J."/>
        </authorList>
    </citation>
    <scope>NUCLEOTIDE SEQUENCE [LARGE SCALE GENOMIC DNA]</scope>
    <source>
        <strain>ATCC BAA-854 / 0140J</strain>
    </source>
</reference>
<name>Y431_STRU0</name>
<keyword id="KW-0963">Cytoplasm</keyword>
<keyword id="KW-1185">Reference proteome</keyword>
<protein>
    <recommendedName>
        <fullName evidence="1">UPF0298 protein SUB0431</fullName>
    </recommendedName>
</protein>
<proteinExistence type="inferred from homology"/>
<sequence length="85" mass="10262">MFEKQKRVGLVVYLYYNRDARKVHKYGDVYYHSKKGRYLVMYVNQNDLEEKMKELQKLKFVKEAVASAFDEIDHQFVGNLHREAN</sequence>
<feature type="chain" id="PRO_1000164065" description="UPF0298 protein SUB0431">
    <location>
        <begin position="1"/>
        <end position="85"/>
    </location>
</feature>
<comment type="subcellular location">
    <subcellularLocation>
        <location evidence="1">Cytoplasm</location>
    </subcellularLocation>
</comment>
<comment type="similarity">
    <text evidence="1">Belongs to the UPF0298 family.</text>
</comment>
<accession>B9DTV0</accession>